<name>RSXA_ECO24</name>
<reference key="1">
    <citation type="journal article" date="2008" name="J. Bacteriol.">
        <title>The pangenome structure of Escherichia coli: comparative genomic analysis of E. coli commensal and pathogenic isolates.</title>
        <authorList>
            <person name="Rasko D.A."/>
            <person name="Rosovitz M.J."/>
            <person name="Myers G.S.A."/>
            <person name="Mongodin E.F."/>
            <person name="Fricke W.F."/>
            <person name="Gajer P."/>
            <person name="Crabtree J."/>
            <person name="Sebaihia M."/>
            <person name="Thomson N.R."/>
            <person name="Chaudhuri R."/>
            <person name="Henderson I.R."/>
            <person name="Sperandio V."/>
            <person name="Ravel J."/>
        </authorList>
    </citation>
    <scope>NUCLEOTIDE SEQUENCE [LARGE SCALE GENOMIC DNA]</scope>
    <source>
        <strain>E24377A / ETEC</strain>
    </source>
</reference>
<dbReference type="EC" id="7.-.-.-" evidence="1"/>
<dbReference type="EMBL" id="CP000800">
    <property type="protein sequence ID" value="ABV21054.1"/>
    <property type="molecule type" value="Genomic_DNA"/>
</dbReference>
<dbReference type="RefSeq" id="WP_000133193.1">
    <property type="nucleotide sequence ID" value="NC_009801.1"/>
</dbReference>
<dbReference type="SMR" id="A7ZM87"/>
<dbReference type="GeneID" id="89516393"/>
<dbReference type="KEGG" id="ecw:EcE24377A_1835"/>
<dbReference type="HOGENOM" id="CLU_095255_1_0_6"/>
<dbReference type="Proteomes" id="UP000001122">
    <property type="component" value="Chromosome"/>
</dbReference>
<dbReference type="GO" id="GO:0005886">
    <property type="term" value="C:plasma membrane"/>
    <property type="evidence" value="ECO:0007669"/>
    <property type="project" value="UniProtKB-SubCell"/>
</dbReference>
<dbReference type="GO" id="GO:0022900">
    <property type="term" value="P:electron transport chain"/>
    <property type="evidence" value="ECO:0007669"/>
    <property type="project" value="UniProtKB-UniRule"/>
</dbReference>
<dbReference type="HAMAP" id="MF_00459">
    <property type="entry name" value="RsxA_RnfA"/>
    <property type="match status" value="1"/>
</dbReference>
<dbReference type="InterPro" id="IPR011293">
    <property type="entry name" value="Ion_transpt_RnfA/RsxA"/>
</dbReference>
<dbReference type="InterPro" id="IPR003667">
    <property type="entry name" value="NqrDE/RnfAE"/>
</dbReference>
<dbReference type="InterPro" id="IPR050133">
    <property type="entry name" value="NqrDE/RnfAE_oxidrdctase"/>
</dbReference>
<dbReference type="NCBIfam" id="NF003481">
    <property type="entry name" value="PRK05151.1"/>
    <property type="match status" value="1"/>
</dbReference>
<dbReference type="NCBIfam" id="TIGR01943">
    <property type="entry name" value="rnfA"/>
    <property type="match status" value="1"/>
</dbReference>
<dbReference type="PANTHER" id="PTHR30335">
    <property type="entry name" value="INTEGRAL MEMBRANE PROTEIN OF SOXR-REDUCING COMPLEX"/>
    <property type="match status" value="1"/>
</dbReference>
<dbReference type="PANTHER" id="PTHR30335:SF0">
    <property type="entry name" value="ION-TRANSLOCATING OXIDOREDUCTASE COMPLEX SUBUNIT A"/>
    <property type="match status" value="1"/>
</dbReference>
<dbReference type="Pfam" id="PF02508">
    <property type="entry name" value="Rnf-Nqr"/>
    <property type="match status" value="1"/>
</dbReference>
<dbReference type="PIRSF" id="PIRSF006102">
    <property type="entry name" value="NQR_DE"/>
    <property type="match status" value="1"/>
</dbReference>
<accession>A7ZM87</accession>
<comment type="function">
    <text evidence="1">Part of a membrane-bound complex that couples electron transfer with translocation of ions across the membrane. Required to maintain the reduced state of SoxR.</text>
</comment>
<comment type="subunit">
    <text evidence="1">The complex is composed of six subunits: RsxA, RsxB, RsxC, RsxD, RsxE and RsxG.</text>
</comment>
<comment type="subcellular location">
    <subcellularLocation>
        <location evidence="1">Cell inner membrane</location>
        <topology evidence="1">Multi-pass membrane protein</topology>
    </subcellularLocation>
</comment>
<comment type="similarity">
    <text evidence="1">Belongs to the NqrDE/RnfAE family.</text>
</comment>
<feature type="chain" id="PRO_1000060326" description="Ion-translocating oxidoreductase complex subunit A">
    <location>
        <begin position="1"/>
        <end position="193"/>
    </location>
</feature>
<feature type="transmembrane region" description="Helical" evidence="1">
    <location>
        <begin position="5"/>
        <end position="25"/>
    </location>
</feature>
<feature type="transmembrane region" description="Helical" evidence="1">
    <location>
        <begin position="39"/>
        <end position="59"/>
    </location>
</feature>
<feature type="transmembrane region" description="Helical" evidence="1">
    <location>
        <begin position="63"/>
        <end position="83"/>
    </location>
</feature>
<feature type="transmembrane region" description="Helical" evidence="1">
    <location>
        <begin position="102"/>
        <end position="122"/>
    </location>
</feature>
<feature type="transmembrane region" description="Helical" evidence="1">
    <location>
        <begin position="134"/>
        <end position="154"/>
    </location>
</feature>
<feature type="transmembrane region" description="Helical" evidence="1">
    <location>
        <begin position="171"/>
        <end position="191"/>
    </location>
</feature>
<proteinExistence type="inferred from homology"/>
<evidence type="ECO:0000255" key="1">
    <source>
        <dbReference type="HAMAP-Rule" id="MF_00459"/>
    </source>
</evidence>
<sequence>MTDYLLLFVGTVLVNNFVLVKFLGLCPFMGVSKKLETAMGMGLATTFVMTLASICAWLIDTWILIPLNLIYLRTLAFILVIAVVVQFTEMVVRKTSPVLYRLLGIFLPLITTNCAVLGVALLNINLGHNFLQSALYGFSAAVGFSLVMVLFAAIRERLAVADVPAPFRGNAIALITAGLMSLAFMGFSGLVKL</sequence>
<gene>
    <name evidence="1" type="primary">rsxA</name>
    <name type="synonym">rnfA</name>
    <name type="ordered locus">EcE24377A_1835</name>
</gene>
<organism>
    <name type="scientific">Escherichia coli O139:H28 (strain E24377A / ETEC)</name>
    <dbReference type="NCBI Taxonomy" id="331111"/>
    <lineage>
        <taxon>Bacteria</taxon>
        <taxon>Pseudomonadati</taxon>
        <taxon>Pseudomonadota</taxon>
        <taxon>Gammaproteobacteria</taxon>
        <taxon>Enterobacterales</taxon>
        <taxon>Enterobacteriaceae</taxon>
        <taxon>Escherichia</taxon>
    </lineage>
</organism>
<protein>
    <recommendedName>
        <fullName evidence="1">Ion-translocating oxidoreductase complex subunit A</fullName>
        <ecNumber evidence="1">7.-.-.-</ecNumber>
    </recommendedName>
    <alternativeName>
        <fullName evidence="1">Rsx electron transport complex subunit A</fullName>
    </alternativeName>
</protein>
<keyword id="KW-0997">Cell inner membrane</keyword>
<keyword id="KW-1003">Cell membrane</keyword>
<keyword id="KW-0249">Electron transport</keyword>
<keyword id="KW-0472">Membrane</keyword>
<keyword id="KW-1185">Reference proteome</keyword>
<keyword id="KW-1278">Translocase</keyword>
<keyword id="KW-0812">Transmembrane</keyword>
<keyword id="KW-1133">Transmembrane helix</keyword>
<keyword id="KW-0813">Transport</keyword>